<reference key="1">
    <citation type="journal article" date="2008" name="Mol. Biol. Evol.">
        <title>Genome evolution of Wolbachia strain wPip from the Culex pipiens group.</title>
        <authorList>
            <person name="Klasson L."/>
            <person name="Walker T."/>
            <person name="Sebaihia M."/>
            <person name="Sanders M.J."/>
            <person name="Quail M.A."/>
            <person name="Lord A."/>
            <person name="Sanders S."/>
            <person name="Earl J."/>
            <person name="O'Neill S.L."/>
            <person name="Thomson N."/>
            <person name="Sinkins S.P."/>
            <person name="Parkhill J."/>
        </authorList>
    </citation>
    <scope>NUCLEOTIDE SEQUENCE [LARGE SCALE GENOMIC DNA]</scope>
    <source>
        <strain>wPip</strain>
    </source>
</reference>
<comment type="function">
    <text evidence="1">This enzyme is involved in nucleotide metabolism: it produces dUMP, the immediate precursor of thymidine nucleotides and it decreases the intracellular concentration of dUTP so that uracil cannot be incorporated into DNA.</text>
</comment>
<comment type="catalytic activity">
    <reaction evidence="1">
        <text>dUTP + H2O = dUMP + diphosphate + H(+)</text>
        <dbReference type="Rhea" id="RHEA:10248"/>
        <dbReference type="ChEBI" id="CHEBI:15377"/>
        <dbReference type="ChEBI" id="CHEBI:15378"/>
        <dbReference type="ChEBI" id="CHEBI:33019"/>
        <dbReference type="ChEBI" id="CHEBI:61555"/>
        <dbReference type="ChEBI" id="CHEBI:246422"/>
        <dbReference type="EC" id="3.6.1.23"/>
    </reaction>
</comment>
<comment type="cofactor">
    <cofactor evidence="1">
        <name>Mg(2+)</name>
        <dbReference type="ChEBI" id="CHEBI:18420"/>
    </cofactor>
</comment>
<comment type="pathway">
    <text evidence="1">Pyrimidine metabolism; dUMP biosynthesis; dUMP from dCTP (dUTP route): step 2/2.</text>
</comment>
<comment type="similarity">
    <text evidence="1">Belongs to the dUTPase family.</text>
</comment>
<name>DUT_WOLPP</name>
<proteinExistence type="inferred from homology"/>
<dbReference type="EC" id="3.6.1.23" evidence="1"/>
<dbReference type="EMBL" id="AM999887">
    <property type="protein sequence ID" value="CAQ54117.1"/>
    <property type="molecule type" value="Genomic_DNA"/>
</dbReference>
<dbReference type="RefSeq" id="WP_007302799.1">
    <property type="nucleotide sequence ID" value="NC_010981.1"/>
</dbReference>
<dbReference type="SMR" id="B3CL69"/>
<dbReference type="KEGG" id="wpi:WP0008"/>
<dbReference type="eggNOG" id="COG0756">
    <property type="taxonomic scope" value="Bacteria"/>
</dbReference>
<dbReference type="HOGENOM" id="CLU_068508_1_2_5"/>
<dbReference type="UniPathway" id="UPA00610">
    <property type="reaction ID" value="UER00666"/>
</dbReference>
<dbReference type="Proteomes" id="UP000008814">
    <property type="component" value="Chromosome"/>
</dbReference>
<dbReference type="GO" id="GO:0004170">
    <property type="term" value="F:dUTP diphosphatase activity"/>
    <property type="evidence" value="ECO:0007669"/>
    <property type="project" value="UniProtKB-UniRule"/>
</dbReference>
<dbReference type="GO" id="GO:0000287">
    <property type="term" value="F:magnesium ion binding"/>
    <property type="evidence" value="ECO:0007669"/>
    <property type="project" value="UniProtKB-UniRule"/>
</dbReference>
<dbReference type="GO" id="GO:0006226">
    <property type="term" value="P:dUMP biosynthetic process"/>
    <property type="evidence" value="ECO:0007669"/>
    <property type="project" value="UniProtKB-UniRule"/>
</dbReference>
<dbReference type="GO" id="GO:0046081">
    <property type="term" value="P:dUTP catabolic process"/>
    <property type="evidence" value="ECO:0007669"/>
    <property type="project" value="InterPro"/>
</dbReference>
<dbReference type="CDD" id="cd07557">
    <property type="entry name" value="trimeric_dUTPase"/>
    <property type="match status" value="1"/>
</dbReference>
<dbReference type="FunFam" id="2.70.40.10:FF:000002">
    <property type="entry name" value="dUTP diphosphatase"/>
    <property type="match status" value="1"/>
</dbReference>
<dbReference type="Gene3D" id="2.70.40.10">
    <property type="match status" value="1"/>
</dbReference>
<dbReference type="HAMAP" id="MF_00116">
    <property type="entry name" value="dUTPase_bact"/>
    <property type="match status" value="1"/>
</dbReference>
<dbReference type="InterPro" id="IPR008181">
    <property type="entry name" value="dUTPase"/>
</dbReference>
<dbReference type="InterPro" id="IPR029054">
    <property type="entry name" value="dUTPase-like"/>
</dbReference>
<dbReference type="InterPro" id="IPR036157">
    <property type="entry name" value="dUTPase-like_sf"/>
</dbReference>
<dbReference type="InterPro" id="IPR033704">
    <property type="entry name" value="dUTPase_trimeric"/>
</dbReference>
<dbReference type="NCBIfam" id="TIGR00576">
    <property type="entry name" value="dut"/>
    <property type="match status" value="1"/>
</dbReference>
<dbReference type="NCBIfam" id="NF001862">
    <property type="entry name" value="PRK00601.1"/>
    <property type="match status" value="1"/>
</dbReference>
<dbReference type="PANTHER" id="PTHR11241">
    <property type="entry name" value="DEOXYURIDINE 5'-TRIPHOSPHATE NUCLEOTIDOHYDROLASE"/>
    <property type="match status" value="1"/>
</dbReference>
<dbReference type="PANTHER" id="PTHR11241:SF0">
    <property type="entry name" value="DEOXYURIDINE 5'-TRIPHOSPHATE NUCLEOTIDOHYDROLASE"/>
    <property type="match status" value="1"/>
</dbReference>
<dbReference type="Pfam" id="PF00692">
    <property type="entry name" value="dUTPase"/>
    <property type="match status" value="1"/>
</dbReference>
<dbReference type="SUPFAM" id="SSF51283">
    <property type="entry name" value="dUTPase-like"/>
    <property type="match status" value="1"/>
</dbReference>
<keyword id="KW-0378">Hydrolase</keyword>
<keyword id="KW-0460">Magnesium</keyword>
<keyword id="KW-0479">Metal-binding</keyword>
<keyword id="KW-0546">Nucleotide metabolism</keyword>
<evidence type="ECO:0000255" key="1">
    <source>
        <dbReference type="HAMAP-Rule" id="MF_00116"/>
    </source>
</evidence>
<gene>
    <name evidence="1" type="primary">dut</name>
    <name type="ordered locus">WP0008</name>
</gene>
<accession>B3CL69</accession>
<sequence>MQRDKIKVEIKKLSHGKSLPLPCYATMQSAGMDLYAALDDSVILNPLERLLIPTGIVIAIPNGFEGQVRPRSGLAAKHGITVLNSPGTIDSDYRGEVKVCLINLSNQPYEIKRGDRIAQILITPVPEIIWNNIEEFYAKETARNEGGFGSSGR</sequence>
<organism>
    <name type="scientific">Wolbachia pipientis subsp. Culex pipiens (strain wPip)</name>
    <dbReference type="NCBI Taxonomy" id="570417"/>
    <lineage>
        <taxon>Bacteria</taxon>
        <taxon>Pseudomonadati</taxon>
        <taxon>Pseudomonadota</taxon>
        <taxon>Alphaproteobacteria</taxon>
        <taxon>Rickettsiales</taxon>
        <taxon>Anaplasmataceae</taxon>
        <taxon>Wolbachieae</taxon>
        <taxon>Wolbachia</taxon>
    </lineage>
</organism>
<protein>
    <recommendedName>
        <fullName evidence="1">Deoxyuridine 5'-triphosphate nucleotidohydrolase</fullName>
        <shortName evidence="1">dUTPase</shortName>
        <ecNumber evidence="1">3.6.1.23</ecNumber>
    </recommendedName>
    <alternativeName>
        <fullName evidence="1">dUTP pyrophosphatase</fullName>
    </alternativeName>
</protein>
<feature type="chain" id="PRO_1000117574" description="Deoxyuridine 5'-triphosphate nucleotidohydrolase">
    <location>
        <begin position="1"/>
        <end position="153"/>
    </location>
</feature>
<feature type="binding site" evidence="1">
    <location>
        <begin position="71"/>
        <end position="73"/>
    </location>
    <ligand>
        <name>substrate</name>
    </ligand>
</feature>
<feature type="binding site" evidence="1">
    <location>
        <position position="84"/>
    </location>
    <ligand>
        <name>substrate</name>
    </ligand>
</feature>
<feature type="binding site" evidence="1">
    <location>
        <begin position="88"/>
        <end position="90"/>
    </location>
    <ligand>
        <name>substrate</name>
    </ligand>
</feature>
<feature type="binding site" evidence="1">
    <location>
        <position position="98"/>
    </location>
    <ligand>
        <name>substrate</name>
    </ligand>
</feature>